<reference key="1">
    <citation type="journal article" date="1998" name="Science">
        <title>Genome sequence of the nematode C. elegans: a platform for investigating biology.</title>
        <authorList>
            <consortium name="The C. elegans sequencing consortium"/>
        </authorList>
    </citation>
    <scope>NUCLEOTIDE SEQUENCE [LARGE SCALE GENOMIC DNA]</scope>
    <source>
        <strain>Bristol N2</strain>
    </source>
</reference>
<evidence type="ECO:0000250" key="1"/>
<evidence type="ECO:0000255" key="2">
    <source>
        <dbReference type="PROSITE-ProRule" id="PRU00132"/>
    </source>
</evidence>
<organism>
    <name type="scientific">Caenorhabditis elegans</name>
    <dbReference type="NCBI Taxonomy" id="6239"/>
    <lineage>
        <taxon>Eukaryota</taxon>
        <taxon>Metazoa</taxon>
        <taxon>Ecdysozoa</taxon>
        <taxon>Nematoda</taxon>
        <taxon>Chromadorea</taxon>
        <taxon>Rhabditida</taxon>
        <taxon>Rhabditina</taxon>
        <taxon>Rhabditomorpha</taxon>
        <taxon>Rhabditoidea</taxon>
        <taxon>Rhabditidae</taxon>
        <taxon>Peloderinae</taxon>
        <taxon>Caenorhabditis</taxon>
    </lineage>
</organism>
<keyword id="KW-0007">Acetylation</keyword>
<keyword id="KW-0966">Cell projection</keyword>
<keyword id="KW-0963">Cytoplasm</keyword>
<keyword id="KW-0206">Cytoskeleton</keyword>
<keyword id="KW-1185">Reference proteome</keyword>
<feature type="initiator methionine" description="Removed" evidence="1">
    <location>
        <position position="1"/>
    </location>
</feature>
<feature type="chain" id="PRO_0000213443" description="Major sperm protein 63">
    <location>
        <begin position="2"/>
        <end position="127"/>
    </location>
</feature>
<feature type="domain" description="MSP" evidence="2">
    <location>
        <begin position="9"/>
        <end position="126"/>
    </location>
</feature>
<feature type="modified residue" description="N-acetylalanine" evidence="1">
    <location>
        <position position="2"/>
    </location>
</feature>
<dbReference type="EMBL" id="FO081106">
    <property type="protein sequence ID" value="CCD69146.1"/>
    <property type="molecule type" value="Genomic_DNA"/>
</dbReference>
<dbReference type="PIR" id="C88164">
    <property type="entry name" value="C88164"/>
</dbReference>
<dbReference type="RefSeq" id="NP_495143.1">
    <property type="nucleotide sequence ID" value="NM_062742.5"/>
</dbReference>
<dbReference type="SMR" id="Q21244"/>
<dbReference type="FunCoup" id="Q21244">
    <property type="interactions" value="12"/>
</dbReference>
<dbReference type="STRING" id="6239.K05F1.7.1"/>
<dbReference type="PaxDb" id="6239-K05F1.7"/>
<dbReference type="PeptideAtlas" id="Q21244"/>
<dbReference type="EnsemblMetazoa" id="K05F1.7.1">
    <property type="protein sequence ID" value="K05F1.7.1"/>
    <property type="gene ID" value="WBGene00003456"/>
</dbReference>
<dbReference type="GeneID" id="173980"/>
<dbReference type="KEGG" id="cel:CELE_K05F1.7"/>
<dbReference type="UCSC" id="K05F1.7">
    <property type="organism name" value="c. elegans"/>
</dbReference>
<dbReference type="AGR" id="WB:WBGene00003456"/>
<dbReference type="CTD" id="173980"/>
<dbReference type="WormBase" id="K05F1.7">
    <property type="protein sequence ID" value="CE02811"/>
    <property type="gene ID" value="WBGene00003456"/>
    <property type="gene designation" value="msp-63"/>
</dbReference>
<dbReference type="eggNOG" id="ENOG502RXF6">
    <property type="taxonomic scope" value="Eukaryota"/>
</dbReference>
<dbReference type="GeneTree" id="ENSGT00970000195833"/>
<dbReference type="HOGENOM" id="CLU_120664_0_1_1"/>
<dbReference type="InParanoid" id="Q21244"/>
<dbReference type="OrthoDB" id="5918453at2759"/>
<dbReference type="PhylomeDB" id="Q21244"/>
<dbReference type="PRO" id="PR:Q21244"/>
<dbReference type="Proteomes" id="UP000001940">
    <property type="component" value="Chromosome II"/>
</dbReference>
<dbReference type="Bgee" id="WBGene00003456">
    <property type="expression patterns" value="Expressed in material anatomical entity and 2 other cell types or tissues"/>
</dbReference>
<dbReference type="GO" id="GO:0005737">
    <property type="term" value="C:cytoplasm"/>
    <property type="evidence" value="ECO:0007669"/>
    <property type="project" value="UniProtKB-KW"/>
</dbReference>
<dbReference type="GO" id="GO:0005856">
    <property type="term" value="C:cytoskeleton"/>
    <property type="evidence" value="ECO:0007669"/>
    <property type="project" value="UniProtKB-SubCell"/>
</dbReference>
<dbReference type="GO" id="GO:0031143">
    <property type="term" value="C:pseudopodium"/>
    <property type="evidence" value="ECO:0007669"/>
    <property type="project" value="UniProtKB-SubCell"/>
</dbReference>
<dbReference type="FunFam" id="2.60.40.10:FF:001120">
    <property type="entry name" value="Major sperm protein 19/31/40/45/50/51/53/59/61/65/81/113/142"/>
    <property type="match status" value="1"/>
</dbReference>
<dbReference type="Gene3D" id="2.60.40.10">
    <property type="entry name" value="Immunoglobulins"/>
    <property type="match status" value="1"/>
</dbReference>
<dbReference type="InterPro" id="IPR013783">
    <property type="entry name" value="Ig-like_fold"/>
</dbReference>
<dbReference type="InterPro" id="IPR000535">
    <property type="entry name" value="MSP_dom"/>
</dbReference>
<dbReference type="InterPro" id="IPR051155">
    <property type="entry name" value="Nematode_MSP"/>
</dbReference>
<dbReference type="InterPro" id="IPR008962">
    <property type="entry name" value="PapD-like_sf"/>
</dbReference>
<dbReference type="PANTHER" id="PTHR22920">
    <property type="entry name" value="MAJOR SPERM PROTEIN"/>
    <property type="match status" value="1"/>
</dbReference>
<dbReference type="PANTHER" id="PTHR22920:SF7">
    <property type="entry name" value="MSP DOMAIN-CONTAINING PROTEIN-RELATED"/>
    <property type="match status" value="1"/>
</dbReference>
<dbReference type="Pfam" id="PF00635">
    <property type="entry name" value="Motile_Sperm"/>
    <property type="match status" value="1"/>
</dbReference>
<dbReference type="SUPFAM" id="SSF49354">
    <property type="entry name" value="PapD-like"/>
    <property type="match status" value="1"/>
</dbReference>
<dbReference type="PROSITE" id="PS50202">
    <property type="entry name" value="MSP"/>
    <property type="match status" value="1"/>
</dbReference>
<name>MSP63_CAEEL</name>
<accession>Q21244</accession>
<comment type="function">
    <text>Central component in molecular interactions underlying sperm crawling. Forms an extensive filament system that extends from sperm villipoda, along the leading edge of the pseudopod.</text>
</comment>
<comment type="subcellular location">
    <subcellularLocation>
        <location>Cell projection</location>
        <location>Pseudopodium</location>
    </subcellularLocation>
    <subcellularLocation>
        <location>Cytoplasm</location>
        <location>Cytoskeleton</location>
    </subcellularLocation>
</comment>
<comment type="tissue specificity">
    <text>Sperm.</text>
</comment>
<comment type="miscellaneous">
    <text>Around 30 MSP isoforms may exist in C.elegans.</text>
</comment>
<proteinExistence type="evidence at transcript level"/>
<sequence length="127" mass="14228">MAQSVPPGDIQTQPGTKIVFNAPYDDKHTYRIKVINSSARRIGYGIKTTNMKRLGVDPPCGVLDPKEAVLLAVSCDAFAFGQEDTNNDRITVEWTNTPDGAAKQFRREWFQGDGMVRRKNLPIEYNP</sequence>
<protein>
    <recommendedName>
        <fullName>Major sperm protein 63</fullName>
        <shortName>MSP</shortName>
    </recommendedName>
</protein>
<gene>
    <name type="primary">msp-63</name>
    <name type="ORF">K05F1.7</name>
</gene>